<proteinExistence type="evidence at transcript level"/>
<keyword id="KW-0009">Actin-binding</keyword>
<keyword id="KW-0963">Cytoplasm</keyword>
<keyword id="KW-0206">Cytoskeleton</keyword>
<keyword id="KW-1185">Reference proteome</keyword>
<keyword id="KW-0677">Repeat</keyword>
<gene>
    <name evidence="4" type="primary">FIM2</name>
    <name evidence="5" type="ordered locus">At5g48460</name>
    <name evidence="7" type="ORF">MJE7.9</name>
</gene>
<comment type="function">
    <text evidence="1">Cross-links actin filaments (F-actin). Stabilizes and prevents F-actin depolymerization mediated by profilin. May regulate actin cytoarchitecture, cell cycle, cell division, cell elongation and cytoplasmic tractus.</text>
</comment>
<comment type="subunit">
    <text evidence="1">Interacts with F-actin.</text>
</comment>
<comment type="subcellular location">
    <subcellularLocation>
        <location evidence="1">Cytoplasm</location>
        <location evidence="1">Cytoskeleton</location>
    </subcellularLocation>
</comment>
<accession>O50064</accession>
<accession>O49971</accession>
<accession>Q67XH3</accession>
<name>FIMB2_ARATH</name>
<dbReference type="EMBL" id="AF042669">
    <property type="protein sequence ID" value="AAB97844.1"/>
    <property type="molecule type" value="mRNA"/>
</dbReference>
<dbReference type="EMBL" id="AF042671">
    <property type="protein sequence ID" value="AAB97847.1"/>
    <property type="molecule type" value="Genomic_DNA"/>
</dbReference>
<dbReference type="EMBL" id="AB020745">
    <property type="protein sequence ID" value="BAA96966.1"/>
    <property type="molecule type" value="Genomic_DNA"/>
</dbReference>
<dbReference type="EMBL" id="CP002688">
    <property type="protein sequence ID" value="AED95673.1"/>
    <property type="molecule type" value="Genomic_DNA"/>
</dbReference>
<dbReference type="EMBL" id="AK176846">
    <property type="protein sequence ID" value="BAD44609.1"/>
    <property type="molecule type" value="mRNA"/>
</dbReference>
<dbReference type="EMBL" id="U77673">
    <property type="protein sequence ID" value="AAC49919.1"/>
    <property type="molecule type" value="mRNA"/>
</dbReference>
<dbReference type="RefSeq" id="NP_199657.1">
    <property type="nucleotide sequence ID" value="NM_124221.3"/>
</dbReference>
<dbReference type="SMR" id="O50064"/>
<dbReference type="FunCoup" id="O50064">
    <property type="interactions" value="2326"/>
</dbReference>
<dbReference type="STRING" id="3702.O50064"/>
<dbReference type="iPTMnet" id="O50064"/>
<dbReference type="PaxDb" id="3702-AT5G48460.1"/>
<dbReference type="ProteomicsDB" id="230578"/>
<dbReference type="EnsemblPlants" id="AT5G48460.1">
    <property type="protein sequence ID" value="AT5G48460.1"/>
    <property type="gene ID" value="AT5G48460"/>
</dbReference>
<dbReference type="GeneID" id="834901"/>
<dbReference type="Gramene" id="AT5G48460.1">
    <property type="protein sequence ID" value="AT5G48460.1"/>
    <property type="gene ID" value="AT5G48460"/>
</dbReference>
<dbReference type="KEGG" id="ath:AT5G48460"/>
<dbReference type="Araport" id="AT5G48460"/>
<dbReference type="TAIR" id="AT5G48460">
    <property type="gene designation" value="ATFIM2"/>
</dbReference>
<dbReference type="eggNOG" id="KOG0046">
    <property type="taxonomic scope" value="Eukaryota"/>
</dbReference>
<dbReference type="HOGENOM" id="CLU_015284_3_1_1"/>
<dbReference type="InParanoid" id="O50064"/>
<dbReference type="OMA" id="GILLXEN"/>
<dbReference type="PhylomeDB" id="O50064"/>
<dbReference type="PRO" id="PR:O50064"/>
<dbReference type="Proteomes" id="UP000006548">
    <property type="component" value="Chromosome 5"/>
</dbReference>
<dbReference type="ExpressionAtlas" id="O50064">
    <property type="expression patterns" value="baseline and differential"/>
</dbReference>
<dbReference type="GO" id="GO:0005737">
    <property type="term" value="C:cytoplasm"/>
    <property type="evidence" value="ECO:0007669"/>
    <property type="project" value="UniProtKB-KW"/>
</dbReference>
<dbReference type="GO" id="GO:0005856">
    <property type="term" value="C:cytoskeleton"/>
    <property type="evidence" value="ECO:0007669"/>
    <property type="project" value="UniProtKB-SubCell"/>
</dbReference>
<dbReference type="GO" id="GO:0051015">
    <property type="term" value="F:actin filament binding"/>
    <property type="evidence" value="ECO:0007669"/>
    <property type="project" value="InterPro"/>
</dbReference>
<dbReference type="GO" id="GO:0051017">
    <property type="term" value="P:actin filament bundle assembly"/>
    <property type="evidence" value="ECO:0000314"/>
    <property type="project" value="TAIR"/>
</dbReference>
<dbReference type="CDD" id="cd21293">
    <property type="entry name" value="CH_AtFIM_like_rpt1"/>
    <property type="match status" value="1"/>
</dbReference>
<dbReference type="CDD" id="cd21296">
    <property type="entry name" value="CH_AtFIM_like_rpt2"/>
    <property type="match status" value="1"/>
</dbReference>
<dbReference type="CDD" id="cd21299">
    <property type="entry name" value="CH_AtFIM_like_rpt3"/>
    <property type="match status" value="1"/>
</dbReference>
<dbReference type="CDD" id="cd21302">
    <property type="entry name" value="CH_AtFIM_like_rpt4"/>
    <property type="match status" value="1"/>
</dbReference>
<dbReference type="FunFam" id="1.10.418.10:FF:000045">
    <property type="entry name" value="Fimbrin-1 isoform A"/>
    <property type="match status" value="1"/>
</dbReference>
<dbReference type="FunFam" id="1.10.418.10:FF:000041">
    <property type="entry name" value="Fimbrin-2 isoform A"/>
    <property type="match status" value="1"/>
</dbReference>
<dbReference type="FunFam" id="1.10.418.10:FF:000031">
    <property type="entry name" value="Fimbrin-2 like"/>
    <property type="match status" value="1"/>
</dbReference>
<dbReference type="FunFam" id="1.10.418.10:FF:000034">
    <property type="entry name" value="Fimbrin-2 like"/>
    <property type="match status" value="1"/>
</dbReference>
<dbReference type="Gene3D" id="1.10.418.10">
    <property type="entry name" value="Calponin-like domain"/>
    <property type="match status" value="4"/>
</dbReference>
<dbReference type="InterPro" id="IPR001589">
    <property type="entry name" value="Actinin_actin-bd_CS"/>
</dbReference>
<dbReference type="InterPro" id="IPR001715">
    <property type="entry name" value="CH_dom"/>
</dbReference>
<dbReference type="InterPro" id="IPR036872">
    <property type="entry name" value="CH_dom_sf"/>
</dbReference>
<dbReference type="InterPro" id="IPR011992">
    <property type="entry name" value="EF-hand-dom_pair"/>
</dbReference>
<dbReference type="InterPro" id="IPR039959">
    <property type="entry name" value="Fimbrin/Plastin"/>
</dbReference>
<dbReference type="PANTHER" id="PTHR19961:SF18">
    <property type="entry name" value="FI19014P1"/>
    <property type="match status" value="1"/>
</dbReference>
<dbReference type="PANTHER" id="PTHR19961">
    <property type="entry name" value="FIMBRIN/PLASTIN"/>
    <property type="match status" value="1"/>
</dbReference>
<dbReference type="Pfam" id="PF00307">
    <property type="entry name" value="CH"/>
    <property type="match status" value="4"/>
</dbReference>
<dbReference type="SMART" id="SM00033">
    <property type="entry name" value="CH"/>
    <property type="match status" value="4"/>
</dbReference>
<dbReference type="SUPFAM" id="SSF47576">
    <property type="entry name" value="Calponin-homology domain, CH-domain"/>
    <property type="match status" value="1"/>
</dbReference>
<dbReference type="SUPFAM" id="SSF47473">
    <property type="entry name" value="EF-hand"/>
    <property type="match status" value="1"/>
</dbReference>
<dbReference type="PROSITE" id="PS00019">
    <property type="entry name" value="ACTININ_1"/>
    <property type="match status" value="1"/>
</dbReference>
<dbReference type="PROSITE" id="PS00020">
    <property type="entry name" value="ACTININ_2"/>
    <property type="match status" value="1"/>
</dbReference>
<dbReference type="PROSITE" id="PS50021">
    <property type="entry name" value="CH"/>
    <property type="match status" value="4"/>
</dbReference>
<reference key="1">
    <citation type="submission" date="1998-01" db="EMBL/GenBank/DDBJ databases">
        <title>Arabidopsis Fimbrin.</title>
        <authorList>
            <person name="Christensen H.E.M."/>
            <person name="Mathur J."/>
            <person name="Chua N.H."/>
        </authorList>
    </citation>
    <scope>NUCLEOTIDE SEQUENCE [MRNA]</scope>
</reference>
<reference key="2">
    <citation type="journal article" date="2000" name="DNA Res.">
        <title>Structural analysis of Arabidopsis thaliana chromosome 5. X. Sequence features of the regions of 3,076,755 bp covered by sixty P1 and TAC clones.</title>
        <authorList>
            <person name="Sato S."/>
            <person name="Nakamura Y."/>
            <person name="Kaneko T."/>
            <person name="Katoh T."/>
            <person name="Asamizu E."/>
            <person name="Kotani H."/>
            <person name="Tabata S."/>
        </authorList>
    </citation>
    <scope>NUCLEOTIDE SEQUENCE [LARGE SCALE GENOMIC DNA]</scope>
    <source>
        <strain>cv. Columbia</strain>
    </source>
</reference>
<reference key="3">
    <citation type="journal article" date="2017" name="Plant J.">
        <title>Araport11: a complete reannotation of the Arabidopsis thaliana reference genome.</title>
        <authorList>
            <person name="Cheng C.Y."/>
            <person name="Krishnakumar V."/>
            <person name="Chan A.P."/>
            <person name="Thibaud-Nissen F."/>
            <person name="Schobel S."/>
            <person name="Town C.D."/>
        </authorList>
    </citation>
    <scope>GENOME REANNOTATION</scope>
    <source>
        <strain>cv. Columbia</strain>
    </source>
</reference>
<reference key="4">
    <citation type="submission" date="2004-09" db="EMBL/GenBank/DDBJ databases">
        <title>Large-scale analysis of RIKEN Arabidopsis full-length (RAFL) cDNAs.</title>
        <authorList>
            <person name="Totoki Y."/>
            <person name="Seki M."/>
            <person name="Ishida J."/>
            <person name="Nakajima M."/>
            <person name="Enju A."/>
            <person name="Kamiya A."/>
            <person name="Narusaka M."/>
            <person name="Shin-i T."/>
            <person name="Nakagawa M."/>
            <person name="Sakamoto N."/>
            <person name="Oishi K."/>
            <person name="Kohara Y."/>
            <person name="Kobayashi M."/>
            <person name="Toyoda A."/>
            <person name="Sakaki Y."/>
            <person name="Sakurai T."/>
            <person name="Iida K."/>
            <person name="Akiyama K."/>
            <person name="Satou M."/>
            <person name="Toyoda T."/>
            <person name="Konagaya A."/>
            <person name="Carninci P."/>
            <person name="Kawai J."/>
            <person name="Hayashizaki Y."/>
            <person name="Shinozaki K."/>
        </authorList>
    </citation>
    <scope>NUCLEOTIDE SEQUENCE [LARGE SCALE MRNA]</scope>
    <source>
        <strain>cv. Columbia</strain>
    </source>
</reference>
<reference key="5">
    <citation type="journal article" date="1998" name="Plant Mol. Biol.">
        <title>Molecular cloning of a novel fimbrin-like cDNA from Arabidopsis thaliana.</title>
        <authorList>
            <person name="McCurdy D.W."/>
            <person name="Kim M."/>
        </authorList>
    </citation>
    <scope>NUCLEOTIDE SEQUENCE [MRNA] OF 203-654</scope>
</reference>
<feature type="chain" id="PRO_0000430598" description="Fimbrin-2">
    <location>
        <begin position="1"/>
        <end position="654"/>
    </location>
</feature>
<feature type="domain" description="Calponin-homology (CH) 1" evidence="2">
    <location>
        <begin position="124"/>
        <end position="241"/>
    </location>
</feature>
<feature type="domain" description="Calponin-homology (CH) 2" evidence="2">
    <location>
        <begin position="269"/>
        <end position="372"/>
    </location>
</feature>
<feature type="domain" description="Calponin-homology (CH) 3" evidence="2">
    <location>
        <begin position="394"/>
        <end position="500"/>
    </location>
</feature>
<feature type="domain" description="Calponin-homology (CH) 4" evidence="2">
    <location>
        <begin position="515"/>
        <end position="623"/>
    </location>
</feature>
<feature type="region of interest" description="Actin-binding 1" evidence="3">
    <location>
        <begin position="124"/>
        <end position="372"/>
    </location>
</feature>
<feature type="region of interest" description="Actin-binding 2" evidence="3">
    <location>
        <begin position="394"/>
        <end position="623"/>
    </location>
</feature>
<feature type="sequence conflict" description="In Ref. 4; BAD44609." ref="4">
    <original>N</original>
    <variation>K</variation>
    <location>
        <position position="71"/>
    </location>
</feature>
<evidence type="ECO:0000250" key="1">
    <source>
        <dbReference type="UniProtKB" id="Q7G188"/>
    </source>
</evidence>
<evidence type="ECO:0000255" key="2">
    <source>
        <dbReference type="PROSITE-ProRule" id="PRU00044"/>
    </source>
</evidence>
<evidence type="ECO:0000255" key="3">
    <source>
        <dbReference type="PROSITE-ProRule" id="PRU00300"/>
    </source>
</evidence>
<evidence type="ECO:0000305" key="4"/>
<evidence type="ECO:0000312" key="5">
    <source>
        <dbReference type="Araport" id="AT5G48460"/>
    </source>
</evidence>
<evidence type="ECO:0000312" key="6">
    <source>
        <dbReference type="EMBL" id="AAB97847.1"/>
    </source>
</evidence>
<evidence type="ECO:0000312" key="7">
    <source>
        <dbReference type="EMBL" id="BAA96966.1"/>
    </source>
</evidence>
<protein>
    <recommendedName>
        <fullName evidence="4">Fimbrin-2</fullName>
        <shortName>AtFIM2</shortName>
    </recommendedName>
    <alternativeName>
        <fullName evidence="4">Fimbrin2</fullName>
    </alternativeName>
</protein>
<sequence length="654" mass="73665">MSGFVGILVSDPWLQNQFTQVELRSLKSHFTSMKRESGKLTVSDLASRMGKSKVVGDQNLSNEERATLIQNFHPNLNDEVDFEFYLRIYLNLQAHVNAIIGSGVKNSSAFLKAATTTLLHTISDSEKSSYVAHINNYLSGDEFLNKCLPINPSSNDLFEVAKDGVLLCKLINVAVPGTIDERAINTKSMLNPWERNENHTLCLNSAKAIGCTVVNIGTQDIIEGRRHLVLGVISQIIKIQLLADLNLKKTPQLVELVGDSKDVEELMSLPPEKILLRWMNFQLRKTEYKKTVTNFSSDVKDAEAYTNLLNVLAPEHKNPSHLAVKSSFERAKLVLEHADKMGCRRYLTAKDIVEGSPNLNLAFVAHIFQHRNGLSTQTKQISFLENLADDIQISREEKAFRFWINSFDGSVYINNVFEDLRDGWILLQTLDKVSPGIVNWKVSSKPPIKLPFKKVENCNQVVKLGKQLKFSLVNIAGNDIVQGNKKLILAYLWQLMRYNILQLLKNLRLHSNGKEITDADILEWANAKVRNNGCKTRMYSFRDKSLSDGVFFLELLSSVQPRSVNWSLVTNGVTDEEKKMNATYVISIARKLGCSIFLLPEDIIEVNQKMMLTLTASIMYWTLKQPLHLNKPIGSPDSHNGSLLDDSTSDSSIE</sequence>
<organism evidence="6">
    <name type="scientific">Arabidopsis thaliana</name>
    <name type="common">Mouse-ear cress</name>
    <dbReference type="NCBI Taxonomy" id="3702"/>
    <lineage>
        <taxon>Eukaryota</taxon>
        <taxon>Viridiplantae</taxon>
        <taxon>Streptophyta</taxon>
        <taxon>Embryophyta</taxon>
        <taxon>Tracheophyta</taxon>
        <taxon>Spermatophyta</taxon>
        <taxon>Magnoliopsida</taxon>
        <taxon>eudicotyledons</taxon>
        <taxon>Gunneridae</taxon>
        <taxon>Pentapetalae</taxon>
        <taxon>rosids</taxon>
        <taxon>malvids</taxon>
        <taxon>Brassicales</taxon>
        <taxon>Brassicaceae</taxon>
        <taxon>Camelineae</taxon>
        <taxon>Arabidopsis</taxon>
    </lineage>
</organism>